<evidence type="ECO:0000250" key="1">
    <source>
        <dbReference type="UniProtKB" id="P82925"/>
    </source>
</evidence>
<evidence type="ECO:0000255" key="2"/>
<evidence type="ECO:0000256" key="3">
    <source>
        <dbReference type="SAM" id="MobiDB-lite"/>
    </source>
</evidence>
<evidence type="ECO:0000305" key="4"/>
<accession>Q61733</accession>
<accession>Q3TSP5</accession>
<accession>Q8VEH4</accession>
<accession>Q9D045</accession>
<comment type="subunit">
    <text evidence="1">Component of the mitochondrial ribosome small subunit (28S) which comprises a 12S rRNA and about 30 distinct proteins.</text>
</comment>
<comment type="subcellular location">
    <subcellularLocation>
        <location evidence="1">Mitochondrion</location>
    </subcellularLocation>
</comment>
<comment type="similarity">
    <text evidence="4">Belongs to the mitochondrion-specific ribosomal protein mS31 family.</text>
</comment>
<protein>
    <recommendedName>
        <fullName evidence="4">Small ribosomal subunit protein mS31</fullName>
    </recommendedName>
    <alternativeName>
        <fullName>28S ribosomal protein S31, mitochondrial</fullName>
        <shortName>MRP-S31</shortName>
        <shortName>S31mt</shortName>
    </alternativeName>
    <alternativeName>
        <fullName>Imogen 38</fullName>
    </alternativeName>
</protein>
<name>RT31_MOUSE</name>
<feature type="transit peptide" description="Mitochondrion" evidence="2">
    <location>
        <begin position="1"/>
        <end position="54"/>
    </location>
</feature>
<feature type="chain" id="PRO_0000030595" description="Small ribosomal subunit protein mS31">
    <location>
        <begin position="55"/>
        <end position="384"/>
    </location>
</feature>
<feature type="region of interest" description="Disordered" evidence="3">
    <location>
        <begin position="101"/>
        <end position="136"/>
    </location>
</feature>
<feature type="compositionally biased region" description="Basic and acidic residues" evidence="3">
    <location>
        <begin position="121"/>
        <end position="136"/>
    </location>
</feature>
<feature type="sequence conflict" description="In Ref. 3; AAH18475." evidence="4" ref="3">
    <original>A</original>
    <variation>V</variation>
    <location>
        <position position="34"/>
    </location>
</feature>
<feature type="sequence conflict" description="In Ref. 3; AAH18475." evidence="4" ref="3">
    <original>M</original>
    <variation>I</variation>
    <location>
        <position position="95"/>
    </location>
</feature>
<feature type="sequence conflict" description="In Ref. 3; AAH18475." evidence="4" ref="3">
    <original>DKA</original>
    <variation>VKE</variation>
    <location>
        <begin position="250"/>
        <end position="252"/>
    </location>
</feature>
<keyword id="KW-0002">3D-structure</keyword>
<keyword id="KW-0496">Mitochondrion</keyword>
<keyword id="KW-1185">Reference proteome</keyword>
<keyword id="KW-0687">Ribonucleoprotein</keyword>
<keyword id="KW-0689">Ribosomal protein</keyword>
<keyword id="KW-0809">Transit peptide</keyword>
<sequence>MLHRIPAFLRPRPFSGLPLSCGNRDVSVAVLPAAQSGAVRTENNIQRHFCTSRSICSKKVDQSVPANEISQKAAESQGRGKETLKKDLLDIIKDMKVDLSTANVKTPKPRGRKPSASLEATVDRLQKAPEDPPKKRNEFLSPELVAAASAVADSLPFDKQTTKSELLRQLQQHEEELRAQKDREKRRISFTHIISNMKIAKSPSGRASTRPQHQIQFDEDMDSSLKQEKPTDFRKRKYLFKGKRLSIFADKAFADEPPEPEASPSLWEIEFAKQLASVADQPFENGFEEMIQWTKEGKLWEFPVNNEAGLDDDGSEFHEHIFLDKYLEDFPKQGPIRLFMELVTCGLSKNPYLSVKQKVEHIEWFRNYFNEKRDILKENNIAFT</sequence>
<proteinExistence type="evidence at protein level"/>
<gene>
    <name type="primary">Mrps31</name>
    <name type="synonym">Imogn38</name>
</gene>
<dbReference type="EMBL" id="Z46966">
    <property type="protein sequence ID" value="CAA87087.1"/>
    <property type="molecule type" value="mRNA"/>
</dbReference>
<dbReference type="EMBL" id="AK005110">
    <property type="protein sequence ID" value="BAB23825.1"/>
    <property type="molecule type" value="mRNA"/>
</dbReference>
<dbReference type="EMBL" id="AK011825">
    <property type="status" value="NOT_ANNOTATED_CDS"/>
    <property type="molecule type" value="mRNA"/>
</dbReference>
<dbReference type="EMBL" id="AK161913">
    <property type="protein sequence ID" value="BAE36630.1"/>
    <property type="molecule type" value="mRNA"/>
</dbReference>
<dbReference type="EMBL" id="BC018475">
    <property type="protein sequence ID" value="AAH18475.1"/>
    <property type="molecule type" value="mRNA"/>
</dbReference>
<dbReference type="EMBL" id="BC027430">
    <property type="protein sequence ID" value="AAH27430.1"/>
    <property type="molecule type" value="mRNA"/>
</dbReference>
<dbReference type="CCDS" id="CCDS22176.1"/>
<dbReference type="RefSeq" id="NP_065585.1">
    <property type="nucleotide sequence ID" value="NM_020560.2"/>
</dbReference>
<dbReference type="PDB" id="7PNT">
    <property type="method" value="EM"/>
    <property type="resolution" value="3.19 A"/>
    <property type="chains" value="Y=1-384"/>
</dbReference>
<dbReference type="PDB" id="7PNU">
    <property type="method" value="EM"/>
    <property type="resolution" value="3.06 A"/>
    <property type="chains" value="Y=1-384"/>
</dbReference>
<dbReference type="PDB" id="7PNV">
    <property type="method" value="EM"/>
    <property type="resolution" value="3.06 A"/>
    <property type="chains" value="Y=1-384"/>
</dbReference>
<dbReference type="PDB" id="7PNW">
    <property type="method" value="EM"/>
    <property type="resolution" value="3.09 A"/>
    <property type="chains" value="Y=1-384"/>
</dbReference>
<dbReference type="PDBsum" id="7PNT"/>
<dbReference type="PDBsum" id="7PNU"/>
<dbReference type="PDBsum" id="7PNV"/>
<dbReference type="PDBsum" id="7PNW"/>
<dbReference type="EMDB" id="EMD-13551"/>
<dbReference type="EMDB" id="EMD-13552"/>
<dbReference type="EMDB" id="EMD-13553"/>
<dbReference type="EMDB" id="EMD-13554"/>
<dbReference type="SMR" id="Q61733"/>
<dbReference type="BioGRID" id="208251">
    <property type="interactions" value="16"/>
</dbReference>
<dbReference type="ComplexPortal" id="CPX-5301">
    <property type="entry name" value="28S mitochondrial small ribosomal subunit"/>
</dbReference>
<dbReference type="FunCoup" id="Q61733">
    <property type="interactions" value="2265"/>
</dbReference>
<dbReference type="IntAct" id="Q61733">
    <property type="interactions" value="2"/>
</dbReference>
<dbReference type="MINT" id="Q61733"/>
<dbReference type="STRING" id="10090.ENSMUSP00000033934"/>
<dbReference type="iPTMnet" id="Q61733"/>
<dbReference type="PhosphoSitePlus" id="Q61733"/>
<dbReference type="PaxDb" id="10090-ENSMUSP00000033934"/>
<dbReference type="PeptideAtlas" id="Q61733"/>
<dbReference type="ProteomicsDB" id="260862"/>
<dbReference type="Pumba" id="Q61733"/>
<dbReference type="Antibodypedia" id="23335">
    <property type="antibodies" value="160 antibodies from 27 providers"/>
</dbReference>
<dbReference type="DNASU" id="57312"/>
<dbReference type="Ensembl" id="ENSMUST00000033934.5">
    <property type="protein sequence ID" value="ENSMUSP00000033934.4"/>
    <property type="gene ID" value="ENSMUSG00000031533.5"/>
</dbReference>
<dbReference type="GeneID" id="57312"/>
<dbReference type="KEGG" id="mmu:57312"/>
<dbReference type="UCSC" id="uc009ldb.2">
    <property type="organism name" value="mouse"/>
</dbReference>
<dbReference type="AGR" id="MGI:1913153"/>
<dbReference type="CTD" id="10240"/>
<dbReference type="MGI" id="MGI:1913153">
    <property type="gene designation" value="Mrps31"/>
</dbReference>
<dbReference type="VEuPathDB" id="HostDB:ENSMUSG00000031533"/>
<dbReference type="eggNOG" id="ENOG502QSX9">
    <property type="taxonomic scope" value="Eukaryota"/>
</dbReference>
<dbReference type="GeneTree" id="ENSGT00390000010017"/>
<dbReference type="HOGENOM" id="CLU_052666_0_0_1"/>
<dbReference type="InParanoid" id="Q61733"/>
<dbReference type="OMA" id="EGYDNYP"/>
<dbReference type="OrthoDB" id="5989925at2759"/>
<dbReference type="PhylomeDB" id="Q61733"/>
<dbReference type="TreeFam" id="TF324305"/>
<dbReference type="Reactome" id="R-MMU-5389840">
    <property type="pathway name" value="Mitochondrial translation elongation"/>
</dbReference>
<dbReference type="Reactome" id="R-MMU-5419276">
    <property type="pathway name" value="Mitochondrial translation termination"/>
</dbReference>
<dbReference type="BioGRID-ORCS" id="57312">
    <property type="hits" value="10 hits in 77 CRISPR screens"/>
</dbReference>
<dbReference type="ChiTaRS" id="Mrps31">
    <property type="organism name" value="mouse"/>
</dbReference>
<dbReference type="PRO" id="PR:Q61733"/>
<dbReference type="Proteomes" id="UP000000589">
    <property type="component" value="Chromosome 8"/>
</dbReference>
<dbReference type="RNAct" id="Q61733">
    <property type="molecule type" value="protein"/>
</dbReference>
<dbReference type="Bgee" id="ENSMUSG00000031533">
    <property type="expression patterns" value="Expressed in ileal epithelium and 269 other cell types or tissues"/>
</dbReference>
<dbReference type="GO" id="GO:0005743">
    <property type="term" value="C:mitochondrial inner membrane"/>
    <property type="evidence" value="ECO:0000303"/>
    <property type="project" value="ComplexPortal"/>
</dbReference>
<dbReference type="GO" id="GO:0005763">
    <property type="term" value="C:mitochondrial small ribosomal subunit"/>
    <property type="evidence" value="ECO:0000250"/>
    <property type="project" value="UniProtKB"/>
</dbReference>
<dbReference type="GO" id="GO:0005739">
    <property type="term" value="C:mitochondrion"/>
    <property type="evidence" value="ECO:0000314"/>
    <property type="project" value="MGI"/>
</dbReference>
<dbReference type="GO" id="GO:0005730">
    <property type="term" value="C:nucleolus"/>
    <property type="evidence" value="ECO:0007669"/>
    <property type="project" value="Ensembl"/>
</dbReference>
<dbReference type="GO" id="GO:0019904">
    <property type="term" value="F:protein domain specific binding"/>
    <property type="evidence" value="ECO:0007669"/>
    <property type="project" value="Ensembl"/>
</dbReference>
<dbReference type="GO" id="GO:0003735">
    <property type="term" value="F:structural constituent of ribosome"/>
    <property type="evidence" value="ECO:0007669"/>
    <property type="project" value="InterPro"/>
</dbReference>
<dbReference type="GO" id="GO:0032543">
    <property type="term" value="P:mitochondrial translation"/>
    <property type="evidence" value="ECO:0000303"/>
    <property type="project" value="ComplexPortal"/>
</dbReference>
<dbReference type="InterPro" id="IPR026299">
    <property type="entry name" value="MRP-S31"/>
</dbReference>
<dbReference type="PANTHER" id="PTHR13231">
    <property type="entry name" value="MITOCHONDRIAL RIBOSOMAL PROTEIN S31"/>
    <property type="match status" value="1"/>
</dbReference>
<dbReference type="PANTHER" id="PTHR13231:SF3">
    <property type="entry name" value="SMALL RIBOSOMAL SUBUNIT PROTEIN MS31"/>
    <property type="match status" value="1"/>
</dbReference>
<dbReference type="Pfam" id="PF15433">
    <property type="entry name" value="MRP-S31"/>
    <property type="match status" value="1"/>
</dbReference>
<organism>
    <name type="scientific">Mus musculus</name>
    <name type="common">Mouse</name>
    <dbReference type="NCBI Taxonomy" id="10090"/>
    <lineage>
        <taxon>Eukaryota</taxon>
        <taxon>Metazoa</taxon>
        <taxon>Chordata</taxon>
        <taxon>Craniata</taxon>
        <taxon>Vertebrata</taxon>
        <taxon>Euteleostomi</taxon>
        <taxon>Mammalia</taxon>
        <taxon>Eutheria</taxon>
        <taxon>Euarchontoglires</taxon>
        <taxon>Glires</taxon>
        <taxon>Rodentia</taxon>
        <taxon>Myomorpha</taxon>
        <taxon>Muroidea</taxon>
        <taxon>Muridae</taxon>
        <taxon>Murinae</taxon>
        <taxon>Mus</taxon>
        <taxon>Mus</taxon>
    </lineage>
</organism>
<reference key="1">
    <citation type="journal article" date="1996" name="J. Clin. Invest.">
        <title>Imogen 38: a novel 38-kD islet mitochondrial autoantigen recognized by T cells from a newly diagnosed type 1 diabetic patient.</title>
        <authorList>
            <person name="Arden S.D."/>
            <person name="Roep B.O."/>
            <person name="Neophytou P.I."/>
            <person name="Usac E.F."/>
            <person name="Duinkerken G."/>
            <person name="de Vries R.R.P."/>
            <person name="Hutton J.C."/>
        </authorList>
    </citation>
    <scope>NUCLEOTIDE SEQUENCE [MRNA]</scope>
    <source>
        <tissue>Pancreatic islet</tissue>
    </source>
</reference>
<reference key="2">
    <citation type="journal article" date="2005" name="Science">
        <title>The transcriptional landscape of the mammalian genome.</title>
        <authorList>
            <person name="Carninci P."/>
            <person name="Kasukawa T."/>
            <person name="Katayama S."/>
            <person name="Gough J."/>
            <person name="Frith M.C."/>
            <person name="Maeda N."/>
            <person name="Oyama R."/>
            <person name="Ravasi T."/>
            <person name="Lenhard B."/>
            <person name="Wells C."/>
            <person name="Kodzius R."/>
            <person name="Shimokawa K."/>
            <person name="Bajic V.B."/>
            <person name="Brenner S.E."/>
            <person name="Batalov S."/>
            <person name="Forrest A.R."/>
            <person name="Zavolan M."/>
            <person name="Davis M.J."/>
            <person name="Wilming L.G."/>
            <person name="Aidinis V."/>
            <person name="Allen J.E."/>
            <person name="Ambesi-Impiombato A."/>
            <person name="Apweiler R."/>
            <person name="Aturaliya R.N."/>
            <person name="Bailey T.L."/>
            <person name="Bansal M."/>
            <person name="Baxter L."/>
            <person name="Beisel K.W."/>
            <person name="Bersano T."/>
            <person name="Bono H."/>
            <person name="Chalk A.M."/>
            <person name="Chiu K.P."/>
            <person name="Choudhary V."/>
            <person name="Christoffels A."/>
            <person name="Clutterbuck D.R."/>
            <person name="Crowe M.L."/>
            <person name="Dalla E."/>
            <person name="Dalrymple B.P."/>
            <person name="de Bono B."/>
            <person name="Della Gatta G."/>
            <person name="di Bernardo D."/>
            <person name="Down T."/>
            <person name="Engstrom P."/>
            <person name="Fagiolini M."/>
            <person name="Faulkner G."/>
            <person name="Fletcher C.F."/>
            <person name="Fukushima T."/>
            <person name="Furuno M."/>
            <person name="Futaki S."/>
            <person name="Gariboldi M."/>
            <person name="Georgii-Hemming P."/>
            <person name="Gingeras T.R."/>
            <person name="Gojobori T."/>
            <person name="Green R.E."/>
            <person name="Gustincich S."/>
            <person name="Harbers M."/>
            <person name="Hayashi Y."/>
            <person name="Hensch T.K."/>
            <person name="Hirokawa N."/>
            <person name="Hill D."/>
            <person name="Huminiecki L."/>
            <person name="Iacono M."/>
            <person name="Ikeo K."/>
            <person name="Iwama A."/>
            <person name="Ishikawa T."/>
            <person name="Jakt M."/>
            <person name="Kanapin A."/>
            <person name="Katoh M."/>
            <person name="Kawasawa Y."/>
            <person name="Kelso J."/>
            <person name="Kitamura H."/>
            <person name="Kitano H."/>
            <person name="Kollias G."/>
            <person name="Krishnan S.P."/>
            <person name="Kruger A."/>
            <person name="Kummerfeld S.K."/>
            <person name="Kurochkin I.V."/>
            <person name="Lareau L.F."/>
            <person name="Lazarevic D."/>
            <person name="Lipovich L."/>
            <person name="Liu J."/>
            <person name="Liuni S."/>
            <person name="McWilliam S."/>
            <person name="Madan Babu M."/>
            <person name="Madera M."/>
            <person name="Marchionni L."/>
            <person name="Matsuda H."/>
            <person name="Matsuzawa S."/>
            <person name="Miki H."/>
            <person name="Mignone F."/>
            <person name="Miyake S."/>
            <person name="Morris K."/>
            <person name="Mottagui-Tabar S."/>
            <person name="Mulder N."/>
            <person name="Nakano N."/>
            <person name="Nakauchi H."/>
            <person name="Ng P."/>
            <person name="Nilsson R."/>
            <person name="Nishiguchi S."/>
            <person name="Nishikawa S."/>
            <person name="Nori F."/>
            <person name="Ohara O."/>
            <person name="Okazaki Y."/>
            <person name="Orlando V."/>
            <person name="Pang K.C."/>
            <person name="Pavan W.J."/>
            <person name="Pavesi G."/>
            <person name="Pesole G."/>
            <person name="Petrovsky N."/>
            <person name="Piazza S."/>
            <person name="Reed J."/>
            <person name="Reid J.F."/>
            <person name="Ring B.Z."/>
            <person name="Ringwald M."/>
            <person name="Rost B."/>
            <person name="Ruan Y."/>
            <person name="Salzberg S.L."/>
            <person name="Sandelin A."/>
            <person name="Schneider C."/>
            <person name="Schoenbach C."/>
            <person name="Sekiguchi K."/>
            <person name="Semple C.A."/>
            <person name="Seno S."/>
            <person name="Sessa L."/>
            <person name="Sheng Y."/>
            <person name="Shibata Y."/>
            <person name="Shimada H."/>
            <person name="Shimada K."/>
            <person name="Silva D."/>
            <person name="Sinclair B."/>
            <person name="Sperling S."/>
            <person name="Stupka E."/>
            <person name="Sugiura K."/>
            <person name="Sultana R."/>
            <person name="Takenaka Y."/>
            <person name="Taki K."/>
            <person name="Tammoja K."/>
            <person name="Tan S.L."/>
            <person name="Tang S."/>
            <person name="Taylor M.S."/>
            <person name="Tegner J."/>
            <person name="Teichmann S.A."/>
            <person name="Ueda H.R."/>
            <person name="van Nimwegen E."/>
            <person name="Verardo R."/>
            <person name="Wei C.L."/>
            <person name="Yagi K."/>
            <person name="Yamanishi H."/>
            <person name="Zabarovsky E."/>
            <person name="Zhu S."/>
            <person name="Zimmer A."/>
            <person name="Hide W."/>
            <person name="Bult C."/>
            <person name="Grimmond S.M."/>
            <person name="Teasdale R.D."/>
            <person name="Liu E.T."/>
            <person name="Brusic V."/>
            <person name="Quackenbush J."/>
            <person name="Wahlestedt C."/>
            <person name="Mattick J.S."/>
            <person name="Hume D.A."/>
            <person name="Kai C."/>
            <person name="Sasaki D."/>
            <person name="Tomaru Y."/>
            <person name="Fukuda S."/>
            <person name="Kanamori-Katayama M."/>
            <person name="Suzuki M."/>
            <person name="Aoki J."/>
            <person name="Arakawa T."/>
            <person name="Iida J."/>
            <person name="Imamura K."/>
            <person name="Itoh M."/>
            <person name="Kato T."/>
            <person name="Kawaji H."/>
            <person name="Kawagashira N."/>
            <person name="Kawashima T."/>
            <person name="Kojima M."/>
            <person name="Kondo S."/>
            <person name="Konno H."/>
            <person name="Nakano K."/>
            <person name="Ninomiya N."/>
            <person name="Nishio T."/>
            <person name="Okada M."/>
            <person name="Plessy C."/>
            <person name="Shibata K."/>
            <person name="Shiraki T."/>
            <person name="Suzuki S."/>
            <person name="Tagami M."/>
            <person name="Waki K."/>
            <person name="Watahiki A."/>
            <person name="Okamura-Oho Y."/>
            <person name="Suzuki H."/>
            <person name="Kawai J."/>
            <person name="Hayashizaki Y."/>
        </authorList>
    </citation>
    <scope>NUCLEOTIDE SEQUENCE [LARGE SCALE MRNA]</scope>
    <source>
        <strain>C57BL/6J</strain>
        <tissue>Cerebellum</tissue>
        <tissue>Embryo</tissue>
        <tissue>Medulla oblongata</tissue>
    </source>
</reference>
<reference key="3">
    <citation type="journal article" date="2004" name="Genome Res.">
        <title>The status, quality, and expansion of the NIH full-length cDNA project: the Mammalian Gene Collection (MGC).</title>
        <authorList>
            <consortium name="The MGC Project Team"/>
        </authorList>
    </citation>
    <scope>NUCLEOTIDE SEQUENCE [LARGE SCALE MRNA]</scope>
    <source>
        <tissue>Mammary gland</tissue>
        <tissue>Salivary gland</tissue>
    </source>
</reference>
<reference key="4">
    <citation type="journal article" date="2010" name="Cell">
        <title>A tissue-specific atlas of mouse protein phosphorylation and expression.</title>
        <authorList>
            <person name="Huttlin E.L."/>
            <person name="Jedrychowski M.P."/>
            <person name="Elias J.E."/>
            <person name="Goswami T."/>
            <person name="Rad R."/>
            <person name="Beausoleil S.A."/>
            <person name="Villen J."/>
            <person name="Haas W."/>
            <person name="Sowa M.E."/>
            <person name="Gygi S.P."/>
        </authorList>
    </citation>
    <scope>IDENTIFICATION BY MASS SPECTROMETRY [LARGE SCALE ANALYSIS]</scope>
    <source>
        <tissue>Brain</tissue>
        <tissue>Brown adipose tissue</tissue>
        <tissue>Heart</tissue>
        <tissue>Kidney</tissue>
        <tissue>Liver</tissue>
        <tissue>Spleen</tissue>
        <tissue>Testis</tissue>
    </source>
</reference>